<gene>
    <name type="primary">mnhB2</name>
    <name type="synonym">mrpB2</name>
    <name type="ordered locus">SH2274</name>
</gene>
<reference key="1">
    <citation type="journal article" date="2005" name="J. Bacteriol.">
        <title>Whole-genome sequencing of Staphylococcus haemolyticus uncovers the extreme plasticity of its genome and the evolution of human-colonizing staphylococcal species.</title>
        <authorList>
            <person name="Takeuchi F."/>
            <person name="Watanabe S."/>
            <person name="Baba T."/>
            <person name="Yuzawa H."/>
            <person name="Ito T."/>
            <person name="Morimoto Y."/>
            <person name="Kuroda M."/>
            <person name="Cui L."/>
            <person name="Takahashi M."/>
            <person name="Ankai A."/>
            <person name="Baba S."/>
            <person name="Fukui S."/>
            <person name="Lee J.C."/>
            <person name="Hiramatsu K."/>
        </authorList>
    </citation>
    <scope>NUCLEOTIDE SEQUENCE [LARGE SCALE GENOMIC DNA]</scope>
    <source>
        <strain>JCSC1435</strain>
    </source>
</reference>
<feature type="chain" id="PRO_0000372283" description="Putative antiporter subunit mnhB2">
    <location>
        <begin position="1"/>
        <end position="141"/>
    </location>
</feature>
<feature type="transmembrane region" description="Helical" evidence="2">
    <location>
        <begin position="10"/>
        <end position="30"/>
    </location>
</feature>
<feature type="transmembrane region" description="Helical" evidence="2">
    <location>
        <begin position="35"/>
        <end position="55"/>
    </location>
</feature>
<feature type="transmembrane region" description="Helical" evidence="2">
    <location>
        <begin position="70"/>
        <end position="90"/>
    </location>
</feature>
<feature type="transmembrane region" description="Helical" evidence="2">
    <location>
        <begin position="116"/>
        <end position="136"/>
    </location>
</feature>
<accession>Q4L444</accession>
<sequence>MKENDVVLRTVTKIVVFILLTFGFYVFFAGHNNPGGGFIGGLIFSSAFILMFLAFDVHEVLESLPIDFKKLMIVGAIISALTAIVPVFFGKSFLYQSEAYIHFPLLGELHVTTITLFELGILLTVVGVIVTIMLALSGGKS</sequence>
<protein>
    <recommendedName>
        <fullName>Putative antiporter subunit mnhB2</fullName>
    </recommendedName>
    <alternativeName>
        <fullName>Mrp complex subunit B2</fullName>
    </alternativeName>
    <alternativeName>
        <fullName>Putative NADH-ubiquinone oxidoreductase subunit mnhB2</fullName>
    </alternativeName>
</protein>
<proteinExistence type="inferred from homology"/>
<name>MNHB2_STAHJ</name>
<comment type="subunit">
    <text evidence="1">May form a heterooligomeric complex that consists of seven subunits: mnhA2, mnhB2, mnhC2, mnhD2, mnhE2, mnhF2 and mnhG2.</text>
</comment>
<comment type="subcellular location">
    <subcellularLocation>
        <location evidence="3">Cell membrane</location>
        <topology evidence="3">Multi-pass membrane protein</topology>
    </subcellularLocation>
</comment>
<comment type="similarity">
    <text evidence="3">Belongs to the CPA3 antiporters (TC 2.A.63) subunit B family.</text>
</comment>
<organism>
    <name type="scientific">Staphylococcus haemolyticus (strain JCSC1435)</name>
    <dbReference type="NCBI Taxonomy" id="279808"/>
    <lineage>
        <taxon>Bacteria</taxon>
        <taxon>Bacillati</taxon>
        <taxon>Bacillota</taxon>
        <taxon>Bacilli</taxon>
        <taxon>Bacillales</taxon>
        <taxon>Staphylococcaceae</taxon>
        <taxon>Staphylococcus</taxon>
    </lineage>
</organism>
<evidence type="ECO:0000250" key="1"/>
<evidence type="ECO:0000255" key="2"/>
<evidence type="ECO:0000305" key="3"/>
<keyword id="KW-0050">Antiport</keyword>
<keyword id="KW-1003">Cell membrane</keyword>
<keyword id="KW-0406">Ion transport</keyword>
<keyword id="KW-0472">Membrane</keyword>
<keyword id="KW-0812">Transmembrane</keyword>
<keyword id="KW-1133">Transmembrane helix</keyword>
<keyword id="KW-0813">Transport</keyword>
<dbReference type="EMBL" id="AP006716">
    <property type="protein sequence ID" value="BAE05583.1"/>
    <property type="molecule type" value="Genomic_DNA"/>
</dbReference>
<dbReference type="RefSeq" id="WP_011276533.1">
    <property type="nucleotide sequence ID" value="NC_007168.1"/>
</dbReference>
<dbReference type="SMR" id="Q4L444"/>
<dbReference type="GeneID" id="93781588"/>
<dbReference type="KEGG" id="sha:SH2274"/>
<dbReference type="eggNOG" id="COG2111">
    <property type="taxonomic scope" value="Bacteria"/>
</dbReference>
<dbReference type="HOGENOM" id="CLU_101659_1_1_9"/>
<dbReference type="OrthoDB" id="9798859at2"/>
<dbReference type="Proteomes" id="UP000000543">
    <property type="component" value="Chromosome"/>
</dbReference>
<dbReference type="GO" id="GO:0005886">
    <property type="term" value="C:plasma membrane"/>
    <property type="evidence" value="ECO:0007669"/>
    <property type="project" value="UniProtKB-SubCell"/>
</dbReference>
<dbReference type="GO" id="GO:0015297">
    <property type="term" value="F:antiporter activity"/>
    <property type="evidence" value="ECO:0007669"/>
    <property type="project" value="UniProtKB-KW"/>
</dbReference>
<dbReference type="GO" id="GO:0006811">
    <property type="term" value="P:monoatomic ion transport"/>
    <property type="evidence" value="ECO:0007669"/>
    <property type="project" value="UniProtKB-KW"/>
</dbReference>
<dbReference type="InterPro" id="IPR050622">
    <property type="entry name" value="CPA3_antiporter_subunitB"/>
</dbReference>
<dbReference type="InterPro" id="IPR007182">
    <property type="entry name" value="MnhB"/>
</dbReference>
<dbReference type="NCBIfam" id="NF009223">
    <property type="entry name" value="PRK12573.1"/>
    <property type="match status" value="1"/>
</dbReference>
<dbReference type="NCBIfam" id="NF009224">
    <property type="entry name" value="PRK12574.1"/>
    <property type="match status" value="1"/>
</dbReference>
<dbReference type="PANTHER" id="PTHR33932">
    <property type="entry name" value="NA(+)/H(+) ANTIPORTER SUBUNIT B"/>
    <property type="match status" value="1"/>
</dbReference>
<dbReference type="PANTHER" id="PTHR33932:SF4">
    <property type="entry name" value="NA(+)_H(+) ANTIPORTER SUBUNIT B"/>
    <property type="match status" value="1"/>
</dbReference>
<dbReference type="Pfam" id="PF04039">
    <property type="entry name" value="MnhB"/>
    <property type="match status" value="1"/>
</dbReference>